<sequence length="248" mass="27047">MSARLEVEILTLFPRMCEGYLAESILGKAREAGIVSVSVSDVREHARGKHRVADDAPYGGGAGMVMKPEPLTEAIEAARARLPGALVALTSPRGARLDQALARRLATHGRLVLVCGRYEGVDERVLAAVDMEVSIGDFVLTGGELAALCVVDAAARLVPGVLGNEASAGAESFAGEDTLLEYPQYTRPPDFRGMKVPEVLLSGDHRRIERWRRREALRVTRERRPDLLERARLTENDLRLIDAGDDEL</sequence>
<organism>
    <name type="scientific">Anaeromyxobacter sp. (strain Fw109-5)</name>
    <dbReference type="NCBI Taxonomy" id="404589"/>
    <lineage>
        <taxon>Bacteria</taxon>
        <taxon>Pseudomonadati</taxon>
        <taxon>Myxococcota</taxon>
        <taxon>Myxococcia</taxon>
        <taxon>Myxococcales</taxon>
        <taxon>Cystobacterineae</taxon>
        <taxon>Anaeromyxobacteraceae</taxon>
        <taxon>Anaeromyxobacter</taxon>
    </lineage>
</organism>
<name>TRMD_ANADF</name>
<comment type="function">
    <text evidence="1">Specifically methylates guanosine-37 in various tRNAs.</text>
</comment>
<comment type="catalytic activity">
    <reaction evidence="1">
        <text>guanosine(37) in tRNA + S-adenosyl-L-methionine = N(1)-methylguanosine(37) in tRNA + S-adenosyl-L-homocysteine + H(+)</text>
        <dbReference type="Rhea" id="RHEA:36899"/>
        <dbReference type="Rhea" id="RHEA-COMP:10145"/>
        <dbReference type="Rhea" id="RHEA-COMP:10147"/>
        <dbReference type="ChEBI" id="CHEBI:15378"/>
        <dbReference type="ChEBI" id="CHEBI:57856"/>
        <dbReference type="ChEBI" id="CHEBI:59789"/>
        <dbReference type="ChEBI" id="CHEBI:73542"/>
        <dbReference type="ChEBI" id="CHEBI:74269"/>
        <dbReference type="EC" id="2.1.1.228"/>
    </reaction>
</comment>
<comment type="subunit">
    <text evidence="1">Homodimer.</text>
</comment>
<comment type="subcellular location">
    <subcellularLocation>
        <location evidence="1">Cytoplasm</location>
    </subcellularLocation>
</comment>
<comment type="similarity">
    <text evidence="1">Belongs to the RNA methyltransferase TrmD family.</text>
</comment>
<evidence type="ECO:0000255" key="1">
    <source>
        <dbReference type="HAMAP-Rule" id="MF_00605"/>
    </source>
</evidence>
<dbReference type="EC" id="2.1.1.228" evidence="1"/>
<dbReference type="EMBL" id="CP000769">
    <property type="protein sequence ID" value="ABS26147.1"/>
    <property type="molecule type" value="Genomic_DNA"/>
</dbReference>
<dbReference type="RefSeq" id="WP_012096725.1">
    <property type="nucleotide sequence ID" value="NC_009675.1"/>
</dbReference>
<dbReference type="SMR" id="A7HBQ1"/>
<dbReference type="STRING" id="404589.Anae109_1944"/>
<dbReference type="KEGG" id="afw:Anae109_1944"/>
<dbReference type="eggNOG" id="COG0336">
    <property type="taxonomic scope" value="Bacteria"/>
</dbReference>
<dbReference type="HOGENOM" id="CLU_047363_0_1_7"/>
<dbReference type="OrthoDB" id="9807416at2"/>
<dbReference type="Proteomes" id="UP000006382">
    <property type="component" value="Chromosome"/>
</dbReference>
<dbReference type="GO" id="GO:0005829">
    <property type="term" value="C:cytosol"/>
    <property type="evidence" value="ECO:0007669"/>
    <property type="project" value="TreeGrafter"/>
</dbReference>
<dbReference type="GO" id="GO:0052906">
    <property type="term" value="F:tRNA (guanine(37)-N1)-methyltransferase activity"/>
    <property type="evidence" value="ECO:0007669"/>
    <property type="project" value="UniProtKB-UniRule"/>
</dbReference>
<dbReference type="GO" id="GO:0002939">
    <property type="term" value="P:tRNA N1-guanine methylation"/>
    <property type="evidence" value="ECO:0007669"/>
    <property type="project" value="TreeGrafter"/>
</dbReference>
<dbReference type="CDD" id="cd18080">
    <property type="entry name" value="TrmD-like"/>
    <property type="match status" value="1"/>
</dbReference>
<dbReference type="FunFam" id="1.10.1270.20:FF:000001">
    <property type="entry name" value="tRNA (guanine-N(1)-)-methyltransferase"/>
    <property type="match status" value="1"/>
</dbReference>
<dbReference type="FunFam" id="3.40.1280.10:FF:000001">
    <property type="entry name" value="tRNA (guanine-N(1)-)-methyltransferase"/>
    <property type="match status" value="1"/>
</dbReference>
<dbReference type="Gene3D" id="3.40.1280.10">
    <property type="match status" value="1"/>
</dbReference>
<dbReference type="Gene3D" id="1.10.1270.20">
    <property type="entry name" value="tRNA(m1g37)methyltransferase, domain 2"/>
    <property type="match status" value="1"/>
</dbReference>
<dbReference type="HAMAP" id="MF_00605">
    <property type="entry name" value="TrmD"/>
    <property type="match status" value="1"/>
</dbReference>
<dbReference type="InterPro" id="IPR029028">
    <property type="entry name" value="Alpha/beta_knot_MTases"/>
</dbReference>
<dbReference type="InterPro" id="IPR023148">
    <property type="entry name" value="tRNA_m1G_MeTrfase_C_sf"/>
</dbReference>
<dbReference type="InterPro" id="IPR002649">
    <property type="entry name" value="tRNA_m1G_MeTrfase_TrmD"/>
</dbReference>
<dbReference type="InterPro" id="IPR029026">
    <property type="entry name" value="tRNA_m1G_MTases_N"/>
</dbReference>
<dbReference type="InterPro" id="IPR016009">
    <property type="entry name" value="tRNA_MeTrfase_TRMD/TRM10"/>
</dbReference>
<dbReference type="NCBIfam" id="NF000648">
    <property type="entry name" value="PRK00026.1"/>
    <property type="match status" value="1"/>
</dbReference>
<dbReference type="NCBIfam" id="TIGR00088">
    <property type="entry name" value="trmD"/>
    <property type="match status" value="1"/>
</dbReference>
<dbReference type="PANTHER" id="PTHR46417">
    <property type="entry name" value="TRNA (GUANINE-N(1)-)-METHYLTRANSFERASE"/>
    <property type="match status" value="1"/>
</dbReference>
<dbReference type="PANTHER" id="PTHR46417:SF1">
    <property type="entry name" value="TRNA (GUANINE-N(1)-)-METHYLTRANSFERASE"/>
    <property type="match status" value="1"/>
</dbReference>
<dbReference type="Pfam" id="PF01746">
    <property type="entry name" value="tRNA_m1G_MT"/>
    <property type="match status" value="1"/>
</dbReference>
<dbReference type="PIRSF" id="PIRSF000386">
    <property type="entry name" value="tRNA_mtase"/>
    <property type="match status" value="1"/>
</dbReference>
<dbReference type="SUPFAM" id="SSF75217">
    <property type="entry name" value="alpha/beta knot"/>
    <property type="match status" value="1"/>
</dbReference>
<reference key="1">
    <citation type="journal article" date="2015" name="Genome Announc.">
        <title>Complete genome sequence of Anaeromyxobacter sp. Fw109-5, an anaerobic, metal-reducing bacterium isolated from a contaminated subsurface environment.</title>
        <authorList>
            <person name="Hwang C."/>
            <person name="Copeland A."/>
            <person name="Lucas S."/>
            <person name="Lapidus A."/>
            <person name="Barry K."/>
            <person name="Glavina Del Rio T."/>
            <person name="Dalin E."/>
            <person name="Tice H."/>
            <person name="Pitluck S."/>
            <person name="Sims D."/>
            <person name="Brettin T."/>
            <person name="Bruce D.C."/>
            <person name="Detter J.C."/>
            <person name="Han C.S."/>
            <person name="Schmutz J."/>
            <person name="Larimer F.W."/>
            <person name="Land M.L."/>
            <person name="Hauser L.J."/>
            <person name="Kyrpides N."/>
            <person name="Lykidis A."/>
            <person name="Richardson P."/>
            <person name="Belieav A."/>
            <person name="Sanford R.A."/>
            <person name="Loeffler F.E."/>
            <person name="Fields M.W."/>
        </authorList>
    </citation>
    <scope>NUCLEOTIDE SEQUENCE [LARGE SCALE GENOMIC DNA]</scope>
    <source>
        <strain>Fw109-5</strain>
    </source>
</reference>
<protein>
    <recommendedName>
        <fullName evidence="1">tRNA (guanine-N(1)-)-methyltransferase</fullName>
        <ecNumber evidence="1">2.1.1.228</ecNumber>
    </recommendedName>
    <alternativeName>
        <fullName evidence="1">M1G-methyltransferase</fullName>
    </alternativeName>
    <alternativeName>
        <fullName evidence="1">tRNA [GM37] methyltransferase</fullName>
    </alternativeName>
</protein>
<accession>A7HBQ1</accession>
<keyword id="KW-0963">Cytoplasm</keyword>
<keyword id="KW-0489">Methyltransferase</keyword>
<keyword id="KW-1185">Reference proteome</keyword>
<keyword id="KW-0949">S-adenosyl-L-methionine</keyword>
<keyword id="KW-0808">Transferase</keyword>
<keyword id="KW-0819">tRNA processing</keyword>
<gene>
    <name evidence="1" type="primary">trmD</name>
    <name type="ordered locus">Anae109_1944</name>
</gene>
<proteinExistence type="inferred from homology"/>
<feature type="chain" id="PRO_1000006446" description="tRNA (guanine-N(1)-)-methyltransferase">
    <location>
        <begin position="1"/>
        <end position="248"/>
    </location>
</feature>
<feature type="binding site" evidence="1">
    <location>
        <position position="116"/>
    </location>
    <ligand>
        <name>S-adenosyl-L-methionine</name>
        <dbReference type="ChEBI" id="CHEBI:59789"/>
    </ligand>
</feature>
<feature type="binding site" evidence="1">
    <location>
        <begin position="135"/>
        <end position="140"/>
    </location>
    <ligand>
        <name>S-adenosyl-L-methionine</name>
        <dbReference type="ChEBI" id="CHEBI:59789"/>
    </ligand>
</feature>